<organism>
    <name type="scientific">Escherichia coli (strain SE11)</name>
    <dbReference type="NCBI Taxonomy" id="409438"/>
    <lineage>
        <taxon>Bacteria</taxon>
        <taxon>Pseudomonadati</taxon>
        <taxon>Pseudomonadota</taxon>
        <taxon>Gammaproteobacteria</taxon>
        <taxon>Enterobacterales</taxon>
        <taxon>Enterobacteriaceae</taxon>
        <taxon>Escherichia</taxon>
    </lineage>
</organism>
<gene>
    <name evidence="1" type="primary">rihC</name>
    <name type="ordered locus">ECSE_0028</name>
</gene>
<proteinExistence type="inferred from homology"/>
<name>RIHC_ECOSE</name>
<sequence>MRLPIFLDTDPGIDDAVAIAAAIFAPELDLQLMTTVAGNVSVEKTTRNALQLLHFWNAEIPLAQGAAVPLVRAPRDAASVHGESGMAGYDFVEHNRKPLGIPALLAIRDALMRAPEPVTLVAIGPLTNIALLLSQCPECKPYIRRLVIMGGSAGRGNCTPNAEFNIAADPEAAACVFRSGIEIVMCGLDVTNQAILTPDYLSTLPQLNRTGKMLHALFSHYRSGSMQSGLRMHDLCAIAWLVRPDLFTLKPCFVAVETQGEFTSGTTVVDIDGCLGKPANVQVALDLDVKGFQQWVAEVLALAS</sequence>
<protein>
    <recommendedName>
        <fullName evidence="1">Non-specific ribonucleoside hydrolase RihC</fullName>
        <ecNumber evidence="1">3.2.-.-</ecNumber>
    </recommendedName>
    <alternativeName>
        <fullName evidence="1">Purine/pyrimidine ribonucleoside hydrolase</fullName>
    </alternativeName>
</protein>
<accession>B6HYX8</accession>
<evidence type="ECO:0000255" key="1">
    <source>
        <dbReference type="HAMAP-Rule" id="MF_01432"/>
    </source>
</evidence>
<dbReference type="EC" id="3.2.-.-" evidence="1"/>
<dbReference type="EMBL" id="AP009240">
    <property type="protein sequence ID" value="BAG75552.1"/>
    <property type="molecule type" value="Genomic_DNA"/>
</dbReference>
<dbReference type="RefSeq" id="WP_001239151.1">
    <property type="nucleotide sequence ID" value="NC_011415.1"/>
</dbReference>
<dbReference type="SMR" id="B6HYX8"/>
<dbReference type="KEGG" id="ecy:ECSE_0028"/>
<dbReference type="HOGENOM" id="CLU_036838_2_2_6"/>
<dbReference type="Proteomes" id="UP000008199">
    <property type="component" value="Chromosome"/>
</dbReference>
<dbReference type="GO" id="GO:0005829">
    <property type="term" value="C:cytosol"/>
    <property type="evidence" value="ECO:0007669"/>
    <property type="project" value="TreeGrafter"/>
</dbReference>
<dbReference type="GO" id="GO:0008477">
    <property type="term" value="F:purine nucleosidase activity"/>
    <property type="evidence" value="ECO:0007669"/>
    <property type="project" value="TreeGrafter"/>
</dbReference>
<dbReference type="GO" id="GO:0045437">
    <property type="term" value="F:uridine nucleosidase activity"/>
    <property type="evidence" value="ECO:0007669"/>
    <property type="project" value="UniProtKB-ARBA"/>
</dbReference>
<dbReference type="GO" id="GO:0006144">
    <property type="term" value="P:purine nucleobase metabolic process"/>
    <property type="evidence" value="ECO:0007669"/>
    <property type="project" value="UniProtKB-UniRule"/>
</dbReference>
<dbReference type="GO" id="GO:0006152">
    <property type="term" value="P:purine nucleoside catabolic process"/>
    <property type="evidence" value="ECO:0007669"/>
    <property type="project" value="TreeGrafter"/>
</dbReference>
<dbReference type="GO" id="GO:0006206">
    <property type="term" value="P:pyrimidine nucleobase metabolic process"/>
    <property type="evidence" value="ECO:0007669"/>
    <property type="project" value="UniProtKB-UniRule"/>
</dbReference>
<dbReference type="CDD" id="cd02651">
    <property type="entry name" value="nuc_hydro_IU_UC_XIUA"/>
    <property type="match status" value="1"/>
</dbReference>
<dbReference type="FunFam" id="3.90.245.10:FF:000002">
    <property type="entry name" value="Non-specific ribonucleoside hydrolase RihC"/>
    <property type="match status" value="1"/>
</dbReference>
<dbReference type="Gene3D" id="3.90.245.10">
    <property type="entry name" value="Ribonucleoside hydrolase-like"/>
    <property type="match status" value="1"/>
</dbReference>
<dbReference type="HAMAP" id="MF_01432">
    <property type="entry name" value="Nucleosid_hydro_RihC"/>
    <property type="match status" value="1"/>
</dbReference>
<dbReference type="InterPro" id="IPR015910">
    <property type="entry name" value="I/U_nuclsd_hydro_CS"/>
</dbReference>
<dbReference type="InterPro" id="IPR001910">
    <property type="entry name" value="Inosine/uridine_hydrolase_dom"/>
</dbReference>
<dbReference type="InterPro" id="IPR023186">
    <property type="entry name" value="IUNH"/>
</dbReference>
<dbReference type="InterPro" id="IPR022976">
    <property type="entry name" value="Nucleosid_hydro_RihC_nonspecif"/>
</dbReference>
<dbReference type="InterPro" id="IPR036452">
    <property type="entry name" value="Ribo_hydro-like"/>
</dbReference>
<dbReference type="NCBIfam" id="NF008036">
    <property type="entry name" value="PRK10768.1"/>
    <property type="match status" value="1"/>
</dbReference>
<dbReference type="PANTHER" id="PTHR12304">
    <property type="entry name" value="INOSINE-URIDINE PREFERRING NUCLEOSIDE HYDROLASE"/>
    <property type="match status" value="1"/>
</dbReference>
<dbReference type="PANTHER" id="PTHR12304:SF15">
    <property type="entry name" value="NON-SPECIFIC RIBONUCLEOSIDE HYDROLASE RIHC"/>
    <property type="match status" value="1"/>
</dbReference>
<dbReference type="Pfam" id="PF01156">
    <property type="entry name" value="IU_nuc_hydro"/>
    <property type="match status" value="1"/>
</dbReference>
<dbReference type="SUPFAM" id="SSF53590">
    <property type="entry name" value="Nucleoside hydrolase"/>
    <property type="match status" value="1"/>
</dbReference>
<dbReference type="PROSITE" id="PS01247">
    <property type="entry name" value="IUNH"/>
    <property type="match status" value="1"/>
</dbReference>
<feature type="chain" id="PRO_1000145814" description="Non-specific ribonucleoside hydrolase RihC">
    <location>
        <begin position="1"/>
        <end position="304"/>
    </location>
</feature>
<feature type="active site" evidence="1">
    <location>
        <position position="233"/>
    </location>
</feature>
<keyword id="KW-0326">Glycosidase</keyword>
<keyword id="KW-0378">Hydrolase</keyword>
<comment type="function">
    <text evidence="1">Hydrolyzes both purine and pyrimidine ribonucleosides with a broad-substrate specificity.</text>
</comment>
<comment type="similarity">
    <text evidence="1">Belongs to the IUNH family. RihC subfamily.</text>
</comment>
<reference key="1">
    <citation type="journal article" date="2008" name="DNA Res.">
        <title>Complete genome sequence and comparative analysis of the wild-type commensal Escherichia coli strain SE11 isolated from a healthy adult.</title>
        <authorList>
            <person name="Oshima K."/>
            <person name="Toh H."/>
            <person name="Ogura Y."/>
            <person name="Sasamoto H."/>
            <person name="Morita H."/>
            <person name="Park S.-H."/>
            <person name="Ooka T."/>
            <person name="Iyoda S."/>
            <person name="Taylor T.D."/>
            <person name="Hayashi T."/>
            <person name="Itoh K."/>
            <person name="Hattori M."/>
        </authorList>
    </citation>
    <scope>NUCLEOTIDE SEQUENCE [LARGE SCALE GENOMIC DNA]</scope>
    <source>
        <strain>SE11</strain>
    </source>
</reference>